<dbReference type="EC" id="6.3.5.7" evidence="1"/>
<dbReference type="EMBL" id="CP001131">
    <property type="protein sequence ID" value="ACG75523.1"/>
    <property type="molecule type" value="Genomic_DNA"/>
</dbReference>
<dbReference type="RefSeq" id="WP_012528274.1">
    <property type="nucleotide sequence ID" value="NC_011145.1"/>
</dbReference>
<dbReference type="SMR" id="B4UIV1"/>
<dbReference type="KEGG" id="ank:AnaeK_4320"/>
<dbReference type="HOGENOM" id="CLU_009600_0_3_7"/>
<dbReference type="OrthoDB" id="9811471at2"/>
<dbReference type="Proteomes" id="UP000001871">
    <property type="component" value="Chromosome"/>
</dbReference>
<dbReference type="GO" id="GO:0030956">
    <property type="term" value="C:glutamyl-tRNA(Gln) amidotransferase complex"/>
    <property type="evidence" value="ECO:0007669"/>
    <property type="project" value="InterPro"/>
</dbReference>
<dbReference type="GO" id="GO:0005524">
    <property type="term" value="F:ATP binding"/>
    <property type="evidence" value="ECO:0007669"/>
    <property type="project" value="UniProtKB-KW"/>
</dbReference>
<dbReference type="GO" id="GO:0050567">
    <property type="term" value="F:glutaminyl-tRNA synthase (glutamine-hydrolyzing) activity"/>
    <property type="evidence" value="ECO:0007669"/>
    <property type="project" value="UniProtKB-UniRule"/>
</dbReference>
<dbReference type="GO" id="GO:0006412">
    <property type="term" value="P:translation"/>
    <property type="evidence" value="ECO:0007669"/>
    <property type="project" value="UniProtKB-UniRule"/>
</dbReference>
<dbReference type="Gene3D" id="3.90.1300.10">
    <property type="entry name" value="Amidase signature (AS) domain"/>
    <property type="match status" value="1"/>
</dbReference>
<dbReference type="HAMAP" id="MF_00120">
    <property type="entry name" value="GatA"/>
    <property type="match status" value="1"/>
</dbReference>
<dbReference type="InterPro" id="IPR000120">
    <property type="entry name" value="Amidase"/>
</dbReference>
<dbReference type="InterPro" id="IPR020556">
    <property type="entry name" value="Amidase_CS"/>
</dbReference>
<dbReference type="InterPro" id="IPR023631">
    <property type="entry name" value="Amidase_dom"/>
</dbReference>
<dbReference type="InterPro" id="IPR036928">
    <property type="entry name" value="AS_sf"/>
</dbReference>
<dbReference type="InterPro" id="IPR004412">
    <property type="entry name" value="GatA"/>
</dbReference>
<dbReference type="NCBIfam" id="TIGR00132">
    <property type="entry name" value="gatA"/>
    <property type="match status" value="1"/>
</dbReference>
<dbReference type="PANTHER" id="PTHR11895:SF151">
    <property type="entry name" value="GLUTAMYL-TRNA(GLN) AMIDOTRANSFERASE SUBUNIT A"/>
    <property type="match status" value="1"/>
</dbReference>
<dbReference type="PANTHER" id="PTHR11895">
    <property type="entry name" value="TRANSAMIDASE"/>
    <property type="match status" value="1"/>
</dbReference>
<dbReference type="Pfam" id="PF01425">
    <property type="entry name" value="Amidase"/>
    <property type="match status" value="1"/>
</dbReference>
<dbReference type="SUPFAM" id="SSF75304">
    <property type="entry name" value="Amidase signature (AS) enzymes"/>
    <property type="match status" value="1"/>
</dbReference>
<dbReference type="PROSITE" id="PS00571">
    <property type="entry name" value="AMIDASES"/>
    <property type="match status" value="1"/>
</dbReference>
<reference key="1">
    <citation type="submission" date="2008-08" db="EMBL/GenBank/DDBJ databases">
        <title>Complete sequence of Anaeromyxobacter sp. K.</title>
        <authorList>
            <consortium name="US DOE Joint Genome Institute"/>
            <person name="Lucas S."/>
            <person name="Copeland A."/>
            <person name="Lapidus A."/>
            <person name="Glavina del Rio T."/>
            <person name="Dalin E."/>
            <person name="Tice H."/>
            <person name="Bruce D."/>
            <person name="Goodwin L."/>
            <person name="Pitluck S."/>
            <person name="Saunders E."/>
            <person name="Brettin T."/>
            <person name="Detter J.C."/>
            <person name="Han C."/>
            <person name="Larimer F."/>
            <person name="Land M."/>
            <person name="Hauser L."/>
            <person name="Kyrpides N."/>
            <person name="Ovchinnikiva G."/>
            <person name="Beliaev A."/>
        </authorList>
    </citation>
    <scope>NUCLEOTIDE SEQUENCE [LARGE SCALE GENOMIC DNA]</scope>
    <source>
        <strain>K</strain>
    </source>
</reference>
<keyword id="KW-0067">ATP-binding</keyword>
<keyword id="KW-0436">Ligase</keyword>
<keyword id="KW-0547">Nucleotide-binding</keyword>
<keyword id="KW-0648">Protein biosynthesis</keyword>
<accession>B4UIV1</accession>
<comment type="function">
    <text evidence="1">Allows the formation of correctly charged Gln-tRNA(Gln) through the transamidation of misacylated Glu-tRNA(Gln) in organisms which lack glutaminyl-tRNA synthetase. The reaction takes place in the presence of glutamine and ATP through an activated gamma-phospho-Glu-tRNA(Gln).</text>
</comment>
<comment type="catalytic activity">
    <reaction evidence="1">
        <text>L-glutamyl-tRNA(Gln) + L-glutamine + ATP + H2O = L-glutaminyl-tRNA(Gln) + L-glutamate + ADP + phosphate + H(+)</text>
        <dbReference type="Rhea" id="RHEA:17521"/>
        <dbReference type="Rhea" id="RHEA-COMP:9681"/>
        <dbReference type="Rhea" id="RHEA-COMP:9684"/>
        <dbReference type="ChEBI" id="CHEBI:15377"/>
        <dbReference type="ChEBI" id="CHEBI:15378"/>
        <dbReference type="ChEBI" id="CHEBI:29985"/>
        <dbReference type="ChEBI" id="CHEBI:30616"/>
        <dbReference type="ChEBI" id="CHEBI:43474"/>
        <dbReference type="ChEBI" id="CHEBI:58359"/>
        <dbReference type="ChEBI" id="CHEBI:78520"/>
        <dbReference type="ChEBI" id="CHEBI:78521"/>
        <dbReference type="ChEBI" id="CHEBI:456216"/>
        <dbReference type="EC" id="6.3.5.7"/>
    </reaction>
</comment>
<comment type="subunit">
    <text evidence="1">Heterotrimer of A, B and C subunits.</text>
</comment>
<comment type="similarity">
    <text evidence="1">Belongs to the amidase family. GatA subfamily.</text>
</comment>
<name>GATA_ANASK</name>
<gene>
    <name evidence="1" type="primary">gatA</name>
    <name type="ordered locus">AnaeK_4320</name>
</gene>
<organism>
    <name type="scientific">Anaeromyxobacter sp. (strain K)</name>
    <dbReference type="NCBI Taxonomy" id="447217"/>
    <lineage>
        <taxon>Bacteria</taxon>
        <taxon>Pseudomonadati</taxon>
        <taxon>Myxococcota</taxon>
        <taxon>Myxococcia</taxon>
        <taxon>Myxococcales</taxon>
        <taxon>Cystobacterineae</taxon>
        <taxon>Anaeromyxobacteraceae</taxon>
        <taxon>Anaeromyxobacter</taxon>
    </lineage>
</organism>
<feature type="chain" id="PRO_1000095105" description="Glutamyl-tRNA(Gln) amidotransferase subunit A">
    <location>
        <begin position="1"/>
        <end position="492"/>
    </location>
</feature>
<feature type="active site" description="Charge relay system" evidence="1">
    <location>
        <position position="84"/>
    </location>
</feature>
<feature type="active site" description="Charge relay system" evidence="1">
    <location>
        <position position="159"/>
    </location>
</feature>
<feature type="active site" description="Acyl-ester intermediate" evidence="1">
    <location>
        <position position="183"/>
    </location>
</feature>
<evidence type="ECO:0000255" key="1">
    <source>
        <dbReference type="HAMAP-Rule" id="MF_00120"/>
    </source>
</evidence>
<sequence length="492" mass="51572">MSTPAKELCRLGLREAGAGVAAKAISSSELVEASLARIQATDGKLGAFLAVSADRARAAARAADARAARGERRSELDGVPVAVKDIFVTKGVPTTAGSRILEGYLPPYDATVVERLEAAGAVIVGKLNMDEFAMGSSNENSAYKPCHNPWDLSRTPGGSSGGSAASVAAGQVHASLGTDTGGSIREPAAFCGVVGVKPTYGRVSRYGVVAFASSLDQVGPLAREVGDAALVLRTIAGHDPRDMTSSTRPVDDYLAPLEDGARGLRVGVPREWLSGGLDAGVEAAVRAALDTYRRLGATLVDVSLPHSKYGIGAYYLIAPAEASSNLARYDGVRFGLRAADAKGLKEMYAESRERGLGAEPKRRIMLGTYALSSGYYDAYYLRAQKVRTLIRRDFDEAFRGCDVIAGPVTPSVAFKLGERTGDPLQMYLADIFTITCNLAALPGLSVPCGLEAASGLPVGLQLVGRPFDEATLFRAARALERELGPLPAPPEP</sequence>
<proteinExistence type="inferred from homology"/>
<protein>
    <recommendedName>
        <fullName evidence="1">Glutamyl-tRNA(Gln) amidotransferase subunit A</fullName>
        <shortName evidence="1">Glu-ADT subunit A</shortName>
        <ecNumber evidence="1">6.3.5.7</ecNumber>
    </recommendedName>
</protein>